<sequence>MAIFEGSFTTASTLKVGIVIARFNDLITNKILSGCLDCLKRHGLDTSELSNQVDIVWVPGSFELPIAAKTLMKKKSYDVVIALGAVIRGETSHYDVVISEASKGISQVSNENNVPIIFGVLTTDTMQQALERAGIKNNLGWNYALQAIEMGSLIKNLN</sequence>
<name>RISB_PROMS</name>
<proteinExistence type="inferred from homology"/>
<reference key="1">
    <citation type="journal article" date="2007" name="PLoS Genet.">
        <title>Patterns and implications of gene gain and loss in the evolution of Prochlorococcus.</title>
        <authorList>
            <person name="Kettler G.C."/>
            <person name="Martiny A.C."/>
            <person name="Huang K."/>
            <person name="Zucker J."/>
            <person name="Coleman M.L."/>
            <person name="Rodrigue S."/>
            <person name="Chen F."/>
            <person name="Lapidus A."/>
            <person name="Ferriera S."/>
            <person name="Johnson J."/>
            <person name="Steglich C."/>
            <person name="Church G.M."/>
            <person name="Richardson P."/>
            <person name="Chisholm S.W."/>
        </authorList>
    </citation>
    <scope>NUCLEOTIDE SEQUENCE [LARGE SCALE GENOMIC DNA]</scope>
    <source>
        <strain>AS9601</strain>
    </source>
</reference>
<dbReference type="EC" id="2.5.1.78" evidence="1"/>
<dbReference type="EMBL" id="CP000551">
    <property type="protein sequence ID" value="ABM71135.1"/>
    <property type="molecule type" value="Genomic_DNA"/>
</dbReference>
<dbReference type="RefSeq" id="WP_011819254.1">
    <property type="nucleotide sequence ID" value="NC_008816.1"/>
</dbReference>
<dbReference type="SMR" id="A2BTM4"/>
<dbReference type="STRING" id="146891.A9601_18521"/>
<dbReference type="KEGG" id="pmb:A9601_18521"/>
<dbReference type="eggNOG" id="COG0054">
    <property type="taxonomic scope" value="Bacteria"/>
</dbReference>
<dbReference type="HOGENOM" id="CLU_089358_1_0_3"/>
<dbReference type="OrthoDB" id="9809709at2"/>
<dbReference type="UniPathway" id="UPA00275">
    <property type="reaction ID" value="UER00404"/>
</dbReference>
<dbReference type="Proteomes" id="UP000002590">
    <property type="component" value="Chromosome"/>
</dbReference>
<dbReference type="GO" id="GO:0005829">
    <property type="term" value="C:cytosol"/>
    <property type="evidence" value="ECO:0007669"/>
    <property type="project" value="TreeGrafter"/>
</dbReference>
<dbReference type="GO" id="GO:0009349">
    <property type="term" value="C:riboflavin synthase complex"/>
    <property type="evidence" value="ECO:0007669"/>
    <property type="project" value="InterPro"/>
</dbReference>
<dbReference type="GO" id="GO:0000906">
    <property type="term" value="F:6,7-dimethyl-8-ribityllumazine synthase activity"/>
    <property type="evidence" value="ECO:0007669"/>
    <property type="project" value="UniProtKB-UniRule"/>
</dbReference>
<dbReference type="GO" id="GO:0009231">
    <property type="term" value="P:riboflavin biosynthetic process"/>
    <property type="evidence" value="ECO:0007669"/>
    <property type="project" value="UniProtKB-UniRule"/>
</dbReference>
<dbReference type="CDD" id="cd09209">
    <property type="entry name" value="Lumazine_synthase-I"/>
    <property type="match status" value="1"/>
</dbReference>
<dbReference type="Gene3D" id="3.40.50.960">
    <property type="entry name" value="Lumazine/riboflavin synthase"/>
    <property type="match status" value="1"/>
</dbReference>
<dbReference type="HAMAP" id="MF_00178">
    <property type="entry name" value="Lumazine_synth"/>
    <property type="match status" value="1"/>
</dbReference>
<dbReference type="InterPro" id="IPR034964">
    <property type="entry name" value="LS"/>
</dbReference>
<dbReference type="InterPro" id="IPR002180">
    <property type="entry name" value="LS/RS"/>
</dbReference>
<dbReference type="InterPro" id="IPR036467">
    <property type="entry name" value="LS/RS_sf"/>
</dbReference>
<dbReference type="NCBIfam" id="TIGR00114">
    <property type="entry name" value="lumazine-synth"/>
    <property type="match status" value="1"/>
</dbReference>
<dbReference type="PANTHER" id="PTHR21058:SF0">
    <property type="entry name" value="6,7-DIMETHYL-8-RIBITYLLUMAZINE SYNTHASE"/>
    <property type="match status" value="1"/>
</dbReference>
<dbReference type="PANTHER" id="PTHR21058">
    <property type="entry name" value="6,7-DIMETHYL-8-RIBITYLLUMAZINE SYNTHASE DMRL SYNTHASE LUMAZINE SYNTHASE"/>
    <property type="match status" value="1"/>
</dbReference>
<dbReference type="Pfam" id="PF00885">
    <property type="entry name" value="DMRL_synthase"/>
    <property type="match status" value="1"/>
</dbReference>
<dbReference type="SUPFAM" id="SSF52121">
    <property type="entry name" value="Lumazine synthase"/>
    <property type="match status" value="1"/>
</dbReference>
<keyword id="KW-0686">Riboflavin biosynthesis</keyword>
<keyword id="KW-0808">Transferase</keyword>
<feature type="chain" id="PRO_1000040483" description="6,7-dimethyl-8-ribityllumazine synthase">
    <location>
        <begin position="1"/>
        <end position="158"/>
    </location>
</feature>
<feature type="active site" description="Proton donor" evidence="1">
    <location>
        <position position="93"/>
    </location>
</feature>
<feature type="binding site" evidence="1">
    <location>
        <position position="23"/>
    </location>
    <ligand>
        <name>5-amino-6-(D-ribitylamino)uracil</name>
        <dbReference type="ChEBI" id="CHEBI:15934"/>
    </ligand>
</feature>
<feature type="binding site" evidence="1">
    <location>
        <begin position="61"/>
        <end position="63"/>
    </location>
    <ligand>
        <name>5-amino-6-(D-ribitylamino)uracil</name>
        <dbReference type="ChEBI" id="CHEBI:15934"/>
    </ligand>
</feature>
<feature type="binding site" evidence="1">
    <location>
        <begin position="85"/>
        <end position="87"/>
    </location>
    <ligand>
        <name>5-amino-6-(D-ribitylamino)uracil</name>
        <dbReference type="ChEBI" id="CHEBI:15934"/>
    </ligand>
</feature>
<feature type="binding site" evidence="1">
    <location>
        <begin position="90"/>
        <end position="91"/>
    </location>
    <ligand>
        <name>(2S)-2-hydroxy-3-oxobutyl phosphate</name>
        <dbReference type="ChEBI" id="CHEBI:58830"/>
    </ligand>
</feature>
<feature type="binding site" evidence="1">
    <location>
        <position position="118"/>
    </location>
    <ligand>
        <name>5-amino-6-(D-ribitylamino)uracil</name>
        <dbReference type="ChEBI" id="CHEBI:15934"/>
    </ligand>
</feature>
<feature type="binding site" evidence="1">
    <location>
        <position position="132"/>
    </location>
    <ligand>
        <name>(2S)-2-hydroxy-3-oxobutyl phosphate</name>
        <dbReference type="ChEBI" id="CHEBI:58830"/>
    </ligand>
</feature>
<evidence type="ECO:0000255" key="1">
    <source>
        <dbReference type="HAMAP-Rule" id="MF_00178"/>
    </source>
</evidence>
<comment type="function">
    <text evidence="1">Catalyzes the formation of 6,7-dimethyl-8-ribityllumazine by condensation of 5-amino-6-(D-ribitylamino)uracil with 3,4-dihydroxy-2-butanone 4-phosphate. This is the penultimate step in the biosynthesis of riboflavin.</text>
</comment>
<comment type="catalytic activity">
    <reaction evidence="1">
        <text>(2S)-2-hydroxy-3-oxobutyl phosphate + 5-amino-6-(D-ribitylamino)uracil = 6,7-dimethyl-8-(1-D-ribityl)lumazine + phosphate + 2 H2O + H(+)</text>
        <dbReference type="Rhea" id="RHEA:26152"/>
        <dbReference type="ChEBI" id="CHEBI:15377"/>
        <dbReference type="ChEBI" id="CHEBI:15378"/>
        <dbReference type="ChEBI" id="CHEBI:15934"/>
        <dbReference type="ChEBI" id="CHEBI:43474"/>
        <dbReference type="ChEBI" id="CHEBI:58201"/>
        <dbReference type="ChEBI" id="CHEBI:58830"/>
        <dbReference type="EC" id="2.5.1.78"/>
    </reaction>
</comment>
<comment type="pathway">
    <text evidence="1">Cofactor biosynthesis; riboflavin biosynthesis; riboflavin from 2-hydroxy-3-oxobutyl phosphate and 5-amino-6-(D-ribitylamino)uracil: step 1/2.</text>
</comment>
<comment type="similarity">
    <text evidence="1">Belongs to the DMRL synthase family.</text>
</comment>
<protein>
    <recommendedName>
        <fullName evidence="1">6,7-dimethyl-8-ribityllumazine synthase</fullName>
        <shortName evidence="1">DMRL synthase</shortName>
        <shortName evidence="1">LS</shortName>
        <shortName evidence="1">Lumazine synthase</shortName>
        <ecNumber evidence="1">2.5.1.78</ecNumber>
    </recommendedName>
</protein>
<accession>A2BTM4</accession>
<organism>
    <name type="scientific">Prochlorococcus marinus (strain AS9601)</name>
    <dbReference type="NCBI Taxonomy" id="146891"/>
    <lineage>
        <taxon>Bacteria</taxon>
        <taxon>Bacillati</taxon>
        <taxon>Cyanobacteriota</taxon>
        <taxon>Cyanophyceae</taxon>
        <taxon>Synechococcales</taxon>
        <taxon>Prochlorococcaceae</taxon>
        <taxon>Prochlorococcus</taxon>
    </lineage>
</organism>
<gene>
    <name evidence="1" type="primary">ribH</name>
    <name type="ordered locus">A9601_18521</name>
</gene>